<name>Y726_STAAM</name>
<dbReference type="EC" id="2.7.1.-"/>
<dbReference type="EMBL" id="BA000017">
    <property type="protein sequence ID" value="BAB56888.1"/>
    <property type="molecule type" value="Genomic_DNA"/>
</dbReference>
<dbReference type="RefSeq" id="WP_000429006.1">
    <property type="nucleotide sequence ID" value="NC_002758.2"/>
</dbReference>
<dbReference type="SMR" id="Q99VP7"/>
<dbReference type="KEGG" id="sav:SAV0726"/>
<dbReference type="HOGENOM" id="CLU_045532_1_0_9"/>
<dbReference type="PhylomeDB" id="Q99VP7"/>
<dbReference type="Proteomes" id="UP000002481">
    <property type="component" value="Chromosome"/>
</dbReference>
<dbReference type="GO" id="GO:0005886">
    <property type="term" value="C:plasma membrane"/>
    <property type="evidence" value="ECO:0007669"/>
    <property type="project" value="TreeGrafter"/>
</dbReference>
<dbReference type="GO" id="GO:0005524">
    <property type="term" value="F:ATP binding"/>
    <property type="evidence" value="ECO:0007669"/>
    <property type="project" value="UniProtKB-KW"/>
</dbReference>
<dbReference type="GO" id="GO:0004143">
    <property type="term" value="F:ATP-dependent diacylglycerol kinase activity"/>
    <property type="evidence" value="ECO:0007669"/>
    <property type="project" value="TreeGrafter"/>
</dbReference>
<dbReference type="GO" id="GO:0046872">
    <property type="term" value="F:metal ion binding"/>
    <property type="evidence" value="ECO:0007669"/>
    <property type="project" value="UniProtKB-KW"/>
</dbReference>
<dbReference type="GO" id="GO:0008654">
    <property type="term" value="P:phospholipid biosynthetic process"/>
    <property type="evidence" value="ECO:0007669"/>
    <property type="project" value="UniProtKB-KW"/>
</dbReference>
<dbReference type="Gene3D" id="2.60.200.40">
    <property type="match status" value="1"/>
</dbReference>
<dbReference type="Gene3D" id="3.40.50.10330">
    <property type="entry name" value="Probable inorganic polyphosphate/atp-NAD kinase, domain 1"/>
    <property type="match status" value="1"/>
</dbReference>
<dbReference type="InterPro" id="IPR017438">
    <property type="entry name" value="ATP-NAD_kinase_N"/>
</dbReference>
<dbReference type="InterPro" id="IPR005218">
    <property type="entry name" value="Diacylglycerol/lipid_kinase"/>
</dbReference>
<dbReference type="InterPro" id="IPR001206">
    <property type="entry name" value="Diacylglycerol_kinase_cat_dom"/>
</dbReference>
<dbReference type="InterPro" id="IPR050187">
    <property type="entry name" value="Lipid_Phosphate_FormReg"/>
</dbReference>
<dbReference type="InterPro" id="IPR016064">
    <property type="entry name" value="NAD/diacylglycerol_kinase_sf"/>
</dbReference>
<dbReference type="InterPro" id="IPR045540">
    <property type="entry name" value="YegS/DAGK_C"/>
</dbReference>
<dbReference type="NCBIfam" id="TIGR00147">
    <property type="entry name" value="YegS/Rv2252/BmrU family lipid kinase"/>
    <property type="match status" value="1"/>
</dbReference>
<dbReference type="PANTHER" id="PTHR12358:SF106">
    <property type="entry name" value="LIPID KINASE YEGS"/>
    <property type="match status" value="1"/>
</dbReference>
<dbReference type="PANTHER" id="PTHR12358">
    <property type="entry name" value="SPHINGOSINE KINASE"/>
    <property type="match status" value="1"/>
</dbReference>
<dbReference type="Pfam" id="PF00781">
    <property type="entry name" value="DAGK_cat"/>
    <property type="match status" value="1"/>
</dbReference>
<dbReference type="Pfam" id="PF19279">
    <property type="entry name" value="YegS_C"/>
    <property type="match status" value="1"/>
</dbReference>
<dbReference type="SMART" id="SM00046">
    <property type="entry name" value="DAGKc"/>
    <property type="match status" value="1"/>
</dbReference>
<dbReference type="SUPFAM" id="SSF111331">
    <property type="entry name" value="NAD kinase/diacylglycerol kinase-like"/>
    <property type="match status" value="1"/>
</dbReference>
<dbReference type="PROSITE" id="PS50146">
    <property type="entry name" value="DAGK"/>
    <property type="match status" value="1"/>
</dbReference>
<comment type="function">
    <text evidence="1">May catalyze the ATP-dependent phosphorylation of lipids other than diacylglycerol (DAG).</text>
</comment>
<comment type="cofactor">
    <cofactor evidence="1">
        <name>Mg(2+)</name>
        <dbReference type="ChEBI" id="CHEBI:18420"/>
    </cofactor>
    <text evidence="1">Binds 1 Mg(2+) ion per subunit. This ion appears to have a structural role and is required for catalytic activity.</text>
</comment>
<comment type="similarity">
    <text evidence="3">Belongs to the diacylglycerol/lipid kinase family.</text>
</comment>
<sequence length="305" mass="33612">MENKYTHGVLFYHEHSGLKNINQGIGEVTTALSSICKHLSIQLSENEGDIIKYCQEIKTKNYAKDVDILFILGGDGTVNELINGVMSHDLQLPIGILPGGTFNDFTKTLNIAPNHKQASEQMISAQVGTYDVIKINNQYALNFVGLGLIVQNAENVQDGSKDIFGKLSYIGSTVKTLLNPTQFNYQLSIDDKTYSGETTMILTANGPFIGGSRIPLTDLSPQDGELNTFIFNEQSFSILNDIFKKRDSMNWNEITQGIEHIPGKKISLTTDPAMKVDIDGEISLETPIDIEVIPNAIQLLTVNDL</sequence>
<accession>Q99VP7</accession>
<feature type="chain" id="PRO_0000386513" description="Putative lipid kinase SAV0726">
    <location>
        <begin position="1"/>
        <end position="305"/>
    </location>
</feature>
<feature type="domain" description="DAGKc" evidence="2">
    <location>
        <begin position="3"/>
        <end position="139"/>
    </location>
</feature>
<feature type="active site" description="Proton acceptor" evidence="1">
    <location>
        <position position="281"/>
    </location>
</feature>
<feature type="binding site" evidence="2">
    <location>
        <position position="44"/>
    </location>
    <ligand>
        <name>ATP</name>
        <dbReference type="ChEBI" id="CHEBI:30616"/>
    </ligand>
</feature>
<feature type="binding site" evidence="2">
    <location>
        <begin position="74"/>
        <end position="80"/>
    </location>
    <ligand>
        <name>ATP</name>
        <dbReference type="ChEBI" id="CHEBI:30616"/>
    </ligand>
</feature>
<feature type="binding site" evidence="2">
    <location>
        <position position="101"/>
    </location>
    <ligand>
        <name>ATP</name>
        <dbReference type="ChEBI" id="CHEBI:30616"/>
    </ligand>
</feature>
<feature type="binding site" evidence="1">
    <location>
        <position position="220"/>
    </location>
    <ligand>
        <name>Mg(2+)</name>
        <dbReference type="ChEBI" id="CHEBI:18420"/>
    </ligand>
</feature>
<feature type="binding site" evidence="1">
    <location>
        <position position="223"/>
    </location>
    <ligand>
        <name>Mg(2+)</name>
        <dbReference type="ChEBI" id="CHEBI:18420"/>
    </ligand>
</feature>
<feature type="binding site" evidence="1">
    <location>
        <position position="225"/>
    </location>
    <ligand>
        <name>Mg(2+)</name>
        <dbReference type="ChEBI" id="CHEBI:18420"/>
    </ligand>
</feature>
<proteinExistence type="inferred from homology"/>
<reference key="1">
    <citation type="journal article" date="2001" name="Lancet">
        <title>Whole genome sequencing of meticillin-resistant Staphylococcus aureus.</title>
        <authorList>
            <person name="Kuroda M."/>
            <person name="Ohta T."/>
            <person name="Uchiyama I."/>
            <person name="Baba T."/>
            <person name="Yuzawa H."/>
            <person name="Kobayashi I."/>
            <person name="Cui L."/>
            <person name="Oguchi A."/>
            <person name="Aoki K."/>
            <person name="Nagai Y."/>
            <person name="Lian J.-Q."/>
            <person name="Ito T."/>
            <person name="Kanamori M."/>
            <person name="Matsumaru H."/>
            <person name="Maruyama A."/>
            <person name="Murakami H."/>
            <person name="Hosoyama A."/>
            <person name="Mizutani-Ui Y."/>
            <person name="Takahashi N.K."/>
            <person name="Sawano T."/>
            <person name="Inoue R."/>
            <person name="Kaito C."/>
            <person name="Sekimizu K."/>
            <person name="Hirakawa H."/>
            <person name="Kuhara S."/>
            <person name="Goto S."/>
            <person name="Yabuzaki J."/>
            <person name="Kanehisa M."/>
            <person name="Yamashita A."/>
            <person name="Oshima K."/>
            <person name="Furuya K."/>
            <person name="Yoshino C."/>
            <person name="Shiba T."/>
            <person name="Hattori M."/>
            <person name="Ogasawara N."/>
            <person name="Hayashi H."/>
            <person name="Hiramatsu K."/>
        </authorList>
    </citation>
    <scope>NUCLEOTIDE SEQUENCE [LARGE SCALE GENOMIC DNA]</scope>
    <source>
        <strain>Mu50 / ATCC 700699</strain>
    </source>
</reference>
<keyword id="KW-0067">ATP-binding</keyword>
<keyword id="KW-0418">Kinase</keyword>
<keyword id="KW-0444">Lipid biosynthesis</keyword>
<keyword id="KW-0443">Lipid metabolism</keyword>
<keyword id="KW-0460">Magnesium</keyword>
<keyword id="KW-0479">Metal-binding</keyword>
<keyword id="KW-0547">Nucleotide-binding</keyword>
<keyword id="KW-0594">Phospholipid biosynthesis</keyword>
<keyword id="KW-1208">Phospholipid metabolism</keyword>
<keyword id="KW-0808">Transferase</keyword>
<evidence type="ECO:0000250" key="1"/>
<evidence type="ECO:0000255" key="2">
    <source>
        <dbReference type="PROSITE-ProRule" id="PRU00783"/>
    </source>
</evidence>
<evidence type="ECO:0000305" key="3"/>
<protein>
    <recommendedName>
        <fullName>Putative lipid kinase SAV0726</fullName>
        <ecNumber>2.7.1.-</ecNumber>
    </recommendedName>
</protein>
<organism>
    <name type="scientific">Staphylococcus aureus (strain Mu50 / ATCC 700699)</name>
    <dbReference type="NCBI Taxonomy" id="158878"/>
    <lineage>
        <taxon>Bacteria</taxon>
        <taxon>Bacillati</taxon>
        <taxon>Bacillota</taxon>
        <taxon>Bacilli</taxon>
        <taxon>Bacillales</taxon>
        <taxon>Staphylococcaceae</taxon>
        <taxon>Staphylococcus</taxon>
    </lineage>
</organism>
<gene>
    <name type="ordered locus">SAV0726</name>
</gene>